<reference key="1">
    <citation type="journal article" date="2004" name="Proc. Natl. Acad. Sci. U.S.A.">
        <title>Insights into the evolution of Yersinia pestis through whole-genome comparison with Yersinia pseudotuberculosis.</title>
        <authorList>
            <person name="Chain P.S.G."/>
            <person name="Carniel E."/>
            <person name="Larimer F.W."/>
            <person name="Lamerdin J."/>
            <person name="Stoutland P.O."/>
            <person name="Regala W.M."/>
            <person name="Georgescu A.M."/>
            <person name="Vergez L.M."/>
            <person name="Land M.L."/>
            <person name="Motin V.L."/>
            <person name="Brubaker R.R."/>
            <person name="Fowler J."/>
            <person name="Hinnebusch J."/>
            <person name="Marceau M."/>
            <person name="Medigue C."/>
            <person name="Simonet M."/>
            <person name="Chenal-Francisque V."/>
            <person name="Souza B."/>
            <person name="Dacheux D."/>
            <person name="Elliott J.M."/>
            <person name="Derbise A."/>
            <person name="Hauser L.J."/>
            <person name="Garcia E."/>
        </authorList>
    </citation>
    <scope>NUCLEOTIDE SEQUENCE [LARGE SCALE GENOMIC DNA]</scope>
    <source>
        <strain>IP32953</strain>
    </source>
</reference>
<sequence length="183" mass="20780">MDLNISTALRSFTQRYIDLWQQQTGHLPASKELYGVPSPCIVETGEDQVFWQPQAFLPEATLTNIERALEIQLHPDIHDFYTQQYAGDMMADLGNHRFTLLQVWSEDDFIRLQENLIGHLVTQKRLKLSPTLFLATTSSEMTMASLCNVSGNVVLEQFGSDKRTLLASTLSHFLDALRPVLPE</sequence>
<protein>
    <recommendedName>
        <fullName evidence="1">Protein Syd</fullName>
    </recommendedName>
</protein>
<accession>Q667I1</accession>
<proteinExistence type="inferred from homology"/>
<name>SYDP_YERPS</name>
<dbReference type="EMBL" id="BX936398">
    <property type="protein sequence ID" value="CAH22249.1"/>
    <property type="molecule type" value="Genomic_DNA"/>
</dbReference>
<dbReference type="RefSeq" id="WP_002212123.1">
    <property type="nucleotide sequence ID" value="NZ_CP009712.1"/>
</dbReference>
<dbReference type="SMR" id="Q667I1"/>
<dbReference type="GeneID" id="57977526"/>
<dbReference type="KEGG" id="ypo:BZ17_3609"/>
<dbReference type="KEGG" id="yps:YPTB3011"/>
<dbReference type="PATRIC" id="fig|273123.14.peg.3789"/>
<dbReference type="Proteomes" id="UP000001011">
    <property type="component" value="Chromosome"/>
</dbReference>
<dbReference type="GO" id="GO:0009898">
    <property type="term" value="C:cytoplasmic side of plasma membrane"/>
    <property type="evidence" value="ECO:0007669"/>
    <property type="project" value="InterPro"/>
</dbReference>
<dbReference type="CDD" id="cd16323">
    <property type="entry name" value="Syd"/>
    <property type="match status" value="1"/>
</dbReference>
<dbReference type="Gene3D" id="3.40.1580.20">
    <property type="entry name" value="Syd protein"/>
    <property type="match status" value="1"/>
</dbReference>
<dbReference type="HAMAP" id="MF_01104">
    <property type="entry name" value="Syd"/>
    <property type="match status" value="1"/>
</dbReference>
<dbReference type="InterPro" id="IPR009948">
    <property type="entry name" value="Syd"/>
</dbReference>
<dbReference type="InterPro" id="IPR038228">
    <property type="entry name" value="Syd_sf"/>
</dbReference>
<dbReference type="NCBIfam" id="NF003439">
    <property type="entry name" value="PRK04968.1"/>
    <property type="match status" value="1"/>
</dbReference>
<dbReference type="Pfam" id="PF07348">
    <property type="entry name" value="Syd"/>
    <property type="match status" value="1"/>
</dbReference>
<gene>
    <name evidence="1" type="primary">syd</name>
    <name type="ordered locus">YPTB3011</name>
</gene>
<comment type="function">
    <text evidence="1">Interacts with the SecY protein in vivo. May bind preferentially to an uncomplexed state of SecY, thus functioning either as a chelating agent for excess SecY in the cell or as a regulatory factor that negatively controls the translocase function.</text>
</comment>
<comment type="subcellular location">
    <subcellularLocation>
        <location evidence="1">Cell inner membrane</location>
        <topology evidence="1">Peripheral membrane protein</topology>
        <orientation evidence="1">Cytoplasmic side</orientation>
    </subcellularLocation>
    <text evidence="1">Loosely associated with the cytoplasmic side of the inner membrane, probably via SecY.</text>
</comment>
<comment type="similarity">
    <text evidence="1">Belongs to the Syd family.</text>
</comment>
<organism>
    <name type="scientific">Yersinia pseudotuberculosis serotype I (strain IP32953)</name>
    <dbReference type="NCBI Taxonomy" id="273123"/>
    <lineage>
        <taxon>Bacteria</taxon>
        <taxon>Pseudomonadati</taxon>
        <taxon>Pseudomonadota</taxon>
        <taxon>Gammaproteobacteria</taxon>
        <taxon>Enterobacterales</taxon>
        <taxon>Yersiniaceae</taxon>
        <taxon>Yersinia</taxon>
    </lineage>
</organism>
<keyword id="KW-0997">Cell inner membrane</keyword>
<keyword id="KW-1003">Cell membrane</keyword>
<keyword id="KW-0472">Membrane</keyword>
<feature type="chain" id="PRO_0000214152" description="Protein Syd">
    <location>
        <begin position="1"/>
        <end position="183"/>
    </location>
</feature>
<evidence type="ECO:0000255" key="1">
    <source>
        <dbReference type="HAMAP-Rule" id="MF_01104"/>
    </source>
</evidence>